<keyword id="KW-0067">ATP-binding</keyword>
<keyword id="KW-0143">Chaperone</keyword>
<keyword id="KW-0963">Cytoplasm</keyword>
<keyword id="KW-0547">Nucleotide-binding</keyword>
<gene>
    <name evidence="1" type="primary">hslU</name>
    <name type="ordered locus">CGSHiEE_00510</name>
</gene>
<name>HSLU_HAEIE</name>
<feature type="chain" id="PRO_1000012746" description="ATP-dependent protease ATPase subunit HslU">
    <location>
        <begin position="1"/>
        <end position="444"/>
    </location>
</feature>
<feature type="region of interest" description="Disordered" evidence="2">
    <location>
        <begin position="143"/>
        <end position="163"/>
    </location>
</feature>
<feature type="binding site" evidence="1">
    <location>
        <position position="18"/>
    </location>
    <ligand>
        <name>ATP</name>
        <dbReference type="ChEBI" id="CHEBI:30616"/>
    </ligand>
</feature>
<feature type="binding site" evidence="1">
    <location>
        <begin position="60"/>
        <end position="65"/>
    </location>
    <ligand>
        <name>ATP</name>
        <dbReference type="ChEBI" id="CHEBI:30616"/>
    </ligand>
</feature>
<feature type="binding site" evidence="1">
    <location>
        <position position="257"/>
    </location>
    <ligand>
        <name>ATP</name>
        <dbReference type="ChEBI" id="CHEBI:30616"/>
    </ligand>
</feature>
<feature type="binding site" evidence="1">
    <location>
        <position position="322"/>
    </location>
    <ligand>
        <name>ATP</name>
        <dbReference type="ChEBI" id="CHEBI:30616"/>
    </ligand>
</feature>
<feature type="binding site" evidence="1">
    <location>
        <position position="394"/>
    </location>
    <ligand>
        <name>ATP</name>
        <dbReference type="ChEBI" id="CHEBI:30616"/>
    </ligand>
</feature>
<reference key="1">
    <citation type="journal article" date="2007" name="Genome Biol.">
        <title>Characterization and modeling of the Haemophilus influenzae core and supragenomes based on the complete genomic sequences of Rd and 12 clinical nontypeable strains.</title>
        <authorList>
            <person name="Hogg J.S."/>
            <person name="Hu F.Z."/>
            <person name="Janto B."/>
            <person name="Boissy R."/>
            <person name="Hayes J."/>
            <person name="Keefe R."/>
            <person name="Post J.C."/>
            <person name="Ehrlich G.D."/>
        </authorList>
    </citation>
    <scope>NUCLEOTIDE SEQUENCE [LARGE SCALE GENOMIC DNA]</scope>
    <source>
        <strain>PittEE</strain>
    </source>
</reference>
<sequence>MSEMTPREIVSELDQHIIGQADAKRAVAIALRNRWRRMQLQEPLRHEVTPKNILMIGPTGVGKTEIARRLAKLANAPFIKVEATKFTEVGYVGKEVDSIIRDLTDSAMKLVRQQEIAKNRARAEDAAEERILDALLPPAKNQWGEVESHDSHSSTRQAFRKKLREGQLDDKEIEIDVSAGVSMGVEIMAPPGMEEMTNQLQSLFQNLGSDKTKKRKMKIKDGLKALIDDEAAKLINPEELKQKAIDAVEQNGIVFIDEIDKICKKGEYSGADVSREGVQRDLLPLVEGSTVSTKHGMVKTDHILFIASGAFQVARPSDLIPELQGRLPIRVELTALSAADFERILTEPHASLTEQYKALMATEGVNIAFTTDAVKKIAEAAFCVNEKTENIGARRLHTVMERLMDKISFSASDMNGQTVNIDAAYVADALGEVVENEDLSRFIL</sequence>
<evidence type="ECO:0000255" key="1">
    <source>
        <dbReference type="HAMAP-Rule" id="MF_00249"/>
    </source>
</evidence>
<evidence type="ECO:0000256" key="2">
    <source>
        <dbReference type="SAM" id="MobiDB-lite"/>
    </source>
</evidence>
<proteinExistence type="inferred from homology"/>
<protein>
    <recommendedName>
        <fullName evidence="1">ATP-dependent protease ATPase subunit HslU</fullName>
    </recommendedName>
    <alternativeName>
        <fullName evidence="1">Unfoldase HslU</fullName>
    </alternativeName>
</protein>
<organism>
    <name type="scientific">Haemophilus influenzae (strain PittEE)</name>
    <dbReference type="NCBI Taxonomy" id="374930"/>
    <lineage>
        <taxon>Bacteria</taxon>
        <taxon>Pseudomonadati</taxon>
        <taxon>Pseudomonadota</taxon>
        <taxon>Gammaproteobacteria</taxon>
        <taxon>Pasteurellales</taxon>
        <taxon>Pasteurellaceae</taxon>
        <taxon>Haemophilus</taxon>
    </lineage>
</organism>
<dbReference type="EMBL" id="CP000671">
    <property type="protein sequence ID" value="ABQ97596.1"/>
    <property type="molecule type" value="Genomic_DNA"/>
</dbReference>
<dbReference type="SMR" id="A5U9Z5"/>
<dbReference type="KEGG" id="hip:CGSHiEE_00510"/>
<dbReference type="HOGENOM" id="CLU_033123_0_0_6"/>
<dbReference type="GO" id="GO:0009376">
    <property type="term" value="C:HslUV protease complex"/>
    <property type="evidence" value="ECO:0007669"/>
    <property type="project" value="UniProtKB-UniRule"/>
</dbReference>
<dbReference type="GO" id="GO:0005524">
    <property type="term" value="F:ATP binding"/>
    <property type="evidence" value="ECO:0007669"/>
    <property type="project" value="UniProtKB-UniRule"/>
</dbReference>
<dbReference type="GO" id="GO:0016887">
    <property type="term" value="F:ATP hydrolysis activity"/>
    <property type="evidence" value="ECO:0007669"/>
    <property type="project" value="InterPro"/>
</dbReference>
<dbReference type="GO" id="GO:0008233">
    <property type="term" value="F:peptidase activity"/>
    <property type="evidence" value="ECO:0007669"/>
    <property type="project" value="InterPro"/>
</dbReference>
<dbReference type="GO" id="GO:0036402">
    <property type="term" value="F:proteasome-activating activity"/>
    <property type="evidence" value="ECO:0007669"/>
    <property type="project" value="UniProtKB-UniRule"/>
</dbReference>
<dbReference type="GO" id="GO:0043335">
    <property type="term" value="P:protein unfolding"/>
    <property type="evidence" value="ECO:0007669"/>
    <property type="project" value="UniProtKB-UniRule"/>
</dbReference>
<dbReference type="GO" id="GO:0051603">
    <property type="term" value="P:proteolysis involved in protein catabolic process"/>
    <property type="evidence" value="ECO:0007669"/>
    <property type="project" value="TreeGrafter"/>
</dbReference>
<dbReference type="CDD" id="cd19498">
    <property type="entry name" value="RecA-like_HslU"/>
    <property type="match status" value="1"/>
</dbReference>
<dbReference type="FunFam" id="1.10.8.10:FF:000028">
    <property type="entry name" value="ATP-dependent protease ATPase subunit HslU"/>
    <property type="match status" value="1"/>
</dbReference>
<dbReference type="FunFam" id="1.10.8.60:FF:000027">
    <property type="entry name" value="ATP-dependent protease ATPase subunit HslU"/>
    <property type="match status" value="1"/>
</dbReference>
<dbReference type="FunFam" id="3.40.50.300:FF:000213">
    <property type="entry name" value="ATP-dependent protease ATPase subunit HslU"/>
    <property type="match status" value="1"/>
</dbReference>
<dbReference type="FunFam" id="3.40.50.300:FF:000220">
    <property type="entry name" value="ATP-dependent protease ATPase subunit HslU"/>
    <property type="match status" value="1"/>
</dbReference>
<dbReference type="Gene3D" id="1.10.8.60">
    <property type="match status" value="1"/>
</dbReference>
<dbReference type="Gene3D" id="1.10.8.10">
    <property type="entry name" value="DNA helicase RuvA subunit, C-terminal domain"/>
    <property type="match status" value="2"/>
</dbReference>
<dbReference type="Gene3D" id="3.40.50.300">
    <property type="entry name" value="P-loop containing nucleotide triphosphate hydrolases"/>
    <property type="match status" value="1"/>
</dbReference>
<dbReference type="HAMAP" id="MF_00249">
    <property type="entry name" value="HslU"/>
    <property type="match status" value="1"/>
</dbReference>
<dbReference type="InterPro" id="IPR003593">
    <property type="entry name" value="AAA+_ATPase"/>
</dbReference>
<dbReference type="InterPro" id="IPR050052">
    <property type="entry name" value="ATP-dep_Clp_protease_ClpX"/>
</dbReference>
<dbReference type="InterPro" id="IPR003959">
    <property type="entry name" value="ATPase_AAA_core"/>
</dbReference>
<dbReference type="InterPro" id="IPR019489">
    <property type="entry name" value="Clp_ATPase_C"/>
</dbReference>
<dbReference type="InterPro" id="IPR004491">
    <property type="entry name" value="HslU"/>
</dbReference>
<dbReference type="InterPro" id="IPR027417">
    <property type="entry name" value="P-loop_NTPase"/>
</dbReference>
<dbReference type="NCBIfam" id="TIGR00390">
    <property type="entry name" value="hslU"/>
    <property type="match status" value="1"/>
</dbReference>
<dbReference type="NCBIfam" id="NF003544">
    <property type="entry name" value="PRK05201.1"/>
    <property type="match status" value="1"/>
</dbReference>
<dbReference type="PANTHER" id="PTHR48102">
    <property type="entry name" value="ATP-DEPENDENT CLP PROTEASE ATP-BINDING SUBUNIT CLPX-LIKE, MITOCHONDRIAL-RELATED"/>
    <property type="match status" value="1"/>
</dbReference>
<dbReference type="PANTHER" id="PTHR48102:SF3">
    <property type="entry name" value="ATP-DEPENDENT PROTEASE ATPASE SUBUNIT HSLU"/>
    <property type="match status" value="1"/>
</dbReference>
<dbReference type="Pfam" id="PF00004">
    <property type="entry name" value="AAA"/>
    <property type="match status" value="1"/>
</dbReference>
<dbReference type="Pfam" id="PF07724">
    <property type="entry name" value="AAA_2"/>
    <property type="match status" value="1"/>
</dbReference>
<dbReference type="SMART" id="SM00382">
    <property type="entry name" value="AAA"/>
    <property type="match status" value="1"/>
</dbReference>
<dbReference type="SMART" id="SM01086">
    <property type="entry name" value="ClpB_D2-small"/>
    <property type="match status" value="1"/>
</dbReference>
<dbReference type="SUPFAM" id="SSF52540">
    <property type="entry name" value="P-loop containing nucleoside triphosphate hydrolases"/>
    <property type="match status" value="1"/>
</dbReference>
<accession>A5U9Z5</accession>
<comment type="function">
    <text evidence="1">ATPase subunit of a proteasome-like degradation complex; this subunit has chaperone activity. The binding of ATP and its subsequent hydrolysis by HslU are essential for unfolding of protein substrates subsequently hydrolyzed by HslV. HslU recognizes the N-terminal part of its protein substrates and unfolds these before they are guided to HslV for hydrolysis.</text>
</comment>
<comment type="subunit">
    <text evidence="1">A double ring-shaped homohexamer of HslV is capped on each side by a ring-shaped HslU homohexamer. The assembly of the HslU/HslV complex is dependent on binding of ATP.</text>
</comment>
<comment type="subcellular location">
    <subcellularLocation>
        <location evidence="1">Cytoplasm</location>
    </subcellularLocation>
</comment>
<comment type="similarity">
    <text evidence="1">Belongs to the ClpX chaperone family. HslU subfamily.</text>
</comment>